<organism>
    <name type="scientific">Bacteroides fragilis (strain YCH46)</name>
    <dbReference type="NCBI Taxonomy" id="295405"/>
    <lineage>
        <taxon>Bacteria</taxon>
        <taxon>Pseudomonadati</taxon>
        <taxon>Bacteroidota</taxon>
        <taxon>Bacteroidia</taxon>
        <taxon>Bacteroidales</taxon>
        <taxon>Bacteroidaceae</taxon>
        <taxon>Bacteroides</taxon>
    </lineage>
</organism>
<evidence type="ECO:0000255" key="1">
    <source>
        <dbReference type="HAMAP-Rule" id="MF_00275"/>
    </source>
</evidence>
<name>KDPA_BACFR</name>
<keyword id="KW-0997">Cell inner membrane</keyword>
<keyword id="KW-1003">Cell membrane</keyword>
<keyword id="KW-0406">Ion transport</keyword>
<keyword id="KW-0472">Membrane</keyword>
<keyword id="KW-0630">Potassium</keyword>
<keyword id="KW-0633">Potassium transport</keyword>
<keyword id="KW-0812">Transmembrane</keyword>
<keyword id="KW-1133">Transmembrane helix</keyword>
<keyword id="KW-0813">Transport</keyword>
<protein>
    <recommendedName>
        <fullName evidence="1">Potassium-transporting ATPase potassium-binding subunit</fullName>
    </recommendedName>
    <alternativeName>
        <fullName evidence="1">ATP phosphohydrolase [potassium-transporting] A chain</fullName>
    </alternativeName>
    <alternativeName>
        <fullName evidence="1">Potassium-binding and translocating subunit A</fullName>
    </alternativeName>
    <alternativeName>
        <fullName evidence="1">Potassium-translocating ATPase A chain</fullName>
    </alternativeName>
</protein>
<feature type="chain" id="PRO_1000114670" description="Potassium-transporting ATPase potassium-binding subunit">
    <location>
        <begin position="1"/>
        <end position="568"/>
    </location>
</feature>
<feature type="transmembrane region" description="Helical" evidence="1">
    <location>
        <begin position="3"/>
        <end position="23"/>
    </location>
</feature>
<feature type="transmembrane region" description="Helical" evidence="1">
    <location>
        <begin position="64"/>
        <end position="84"/>
    </location>
</feature>
<feature type="transmembrane region" description="Helical" evidence="1">
    <location>
        <begin position="133"/>
        <end position="153"/>
    </location>
</feature>
<feature type="transmembrane region" description="Helical" evidence="1">
    <location>
        <begin position="179"/>
        <end position="199"/>
    </location>
</feature>
<feature type="transmembrane region" description="Helical" evidence="1">
    <location>
        <begin position="255"/>
        <end position="275"/>
    </location>
</feature>
<feature type="transmembrane region" description="Helical" evidence="1">
    <location>
        <begin position="281"/>
        <end position="301"/>
    </location>
</feature>
<feature type="transmembrane region" description="Helical" evidence="1">
    <location>
        <begin position="375"/>
        <end position="395"/>
    </location>
</feature>
<feature type="transmembrane region" description="Helical" evidence="1">
    <location>
        <begin position="418"/>
        <end position="438"/>
    </location>
</feature>
<feature type="transmembrane region" description="Helical" evidence="1">
    <location>
        <begin position="497"/>
        <end position="517"/>
    </location>
</feature>
<feature type="transmembrane region" description="Helical" evidence="1">
    <location>
        <begin position="535"/>
        <end position="555"/>
    </location>
</feature>
<comment type="function">
    <text evidence="1">Part of the high-affinity ATP-driven potassium transport (or Kdp) system, which catalyzes the hydrolysis of ATP coupled with the electrogenic transport of potassium into the cytoplasm. This subunit binds the periplasmic potassium ions and delivers the ions to the membrane domain of KdpB through an intramembrane tunnel.</text>
</comment>
<comment type="subunit">
    <text evidence="1">The system is composed of three essential subunits: KdpA, KdpB and KdpC.</text>
</comment>
<comment type="subcellular location">
    <subcellularLocation>
        <location evidence="1">Cell inner membrane</location>
        <topology evidence="1">Multi-pass membrane protein</topology>
    </subcellularLocation>
</comment>
<comment type="similarity">
    <text evidence="1">Belongs to the KdpA family.</text>
</comment>
<dbReference type="EMBL" id="AP006841">
    <property type="protein sequence ID" value="BAD47327.1"/>
    <property type="molecule type" value="Genomic_DNA"/>
</dbReference>
<dbReference type="RefSeq" id="WP_008658368.1">
    <property type="nucleotide sequence ID" value="NZ_UYXF01000037.1"/>
</dbReference>
<dbReference type="RefSeq" id="YP_097861.1">
    <property type="nucleotide sequence ID" value="NC_006347.1"/>
</dbReference>
<dbReference type="SMR" id="Q64YU9"/>
<dbReference type="STRING" id="295405.BF0578"/>
<dbReference type="GeneID" id="60369112"/>
<dbReference type="KEGG" id="bfr:BF0578"/>
<dbReference type="PATRIC" id="fig|295405.11.peg.594"/>
<dbReference type="HOGENOM" id="CLU_018614_3_0_10"/>
<dbReference type="OrthoDB" id="9763796at2"/>
<dbReference type="Proteomes" id="UP000002197">
    <property type="component" value="Chromosome"/>
</dbReference>
<dbReference type="GO" id="GO:0005886">
    <property type="term" value="C:plasma membrane"/>
    <property type="evidence" value="ECO:0007669"/>
    <property type="project" value="UniProtKB-SubCell"/>
</dbReference>
<dbReference type="GO" id="GO:0008556">
    <property type="term" value="F:P-type potassium transmembrane transporter activity"/>
    <property type="evidence" value="ECO:0007669"/>
    <property type="project" value="InterPro"/>
</dbReference>
<dbReference type="GO" id="GO:0030955">
    <property type="term" value="F:potassium ion binding"/>
    <property type="evidence" value="ECO:0007669"/>
    <property type="project" value="UniProtKB-UniRule"/>
</dbReference>
<dbReference type="HAMAP" id="MF_00275">
    <property type="entry name" value="KdpA"/>
    <property type="match status" value="1"/>
</dbReference>
<dbReference type="InterPro" id="IPR004623">
    <property type="entry name" value="KdpA"/>
</dbReference>
<dbReference type="NCBIfam" id="TIGR00680">
    <property type="entry name" value="kdpA"/>
    <property type="match status" value="1"/>
</dbReference>
<dbReference type="PANTHER" id="PTHR30607">
    <property type="entry name" value="POTASSIUM-TRANSPORTING ATPASE A CHAIN"/>
    <property type="match status" value="1"/>
</dbReference>
<dbReference type="PANTHER" id="PTHR30607:SF2">
    <property type="entry name" value="POTASSIUM-TRANSPORTING ATPASE POTASSIUM-BINDING SUBUNIT"/>
    <property type="match status" value="1"/>
</dbReference>
<dbReference type="Pfam" id="PF03814">
    <property type="entry name" value="KdpA"/>
    <property type="match status" value="1"/>
</dbReference>
<dbReference type="PIRSF" id="PIRSF001294">
    <property type="entry name" value="K_ATPaseA"/>
    <property type="match status" value="1"/>
</dbReference>
<proteinExistence type="inferred from homology"/>
<reference key="1">
    <citation type="journal article" date="2004" name="Proc. Natl. Acad. Sci. U.S.A.">
        <title>Genomic analysis of Bacteroides fragilis reveals extensive DNA inversions regulating cell surface adaptation.</title>
        <authorList>
            <person name="Kuwahara T."/>
            <person name="Yamashita A."/>
            <person name="Hirakawa H."/>
            <person name="Nakayama H."/>
            <person name="Toh H."/>
            <person name="Okada N."/>
            <person name="Kuhara S."/>
            <person name="Hattori M."/>
            <person name="Hayashi T."/>
            <person name="Ohnishi Y."/>
        </authorList>
    </citation>
    <scope>NUCLEOTIDE SEQUENCE [LARGE SCALE GENOMIC DNA]</scope>
    <source>
        <strain>YCH46</strain>
    </source>
</reference>
<accession>Q64YU9</accession>
<gene>
    <name evidence="1" type="primary">kdpA</name>
    <name type="ordered locus">BF0578</name>
</gene>
<sequence>MNTEILGVAVQIVLMVVLAYPLGRYIARVYKGEKTWSDFMAPIERVIYKICGINPQEEMNWKQFLKALLILNAFWFVWGMVLLVSQGWLPLNPDGNGAQTPDQAFNTCISFMVNCNLQHYSGESGLTYFTQLFVIMLFQFITAATGMAAMAGVMKSMAAKSTQTIGNFWHFLVISCTRILLPLSLVVGFILILQGTPMGFDGRMQLTTLEGQEQMVSQGPTAAIVPIKQLGTNGGGYFGVNSSHPLENPTYLTNMVECWSILIIPMAMVLALGFYTNRRKLGYSIFGVMLFAYLAGVFINVGQEMGGNPRISEMGIAQDHGAMEGKEVRLGAGATALWSVTTTVTSNGSVNGMHDSTMPLSGMVEMLNMQINTWFGGVGVGWLNYYTFIIMAVFISGLMVGRTPEFLGKKVEAREMKIATFVALLHPFVILVFTAISSYVYTHHPDFVESEGGWLNNLGFHGLSEQLYEYTSSAANNGSGFEGLGDNTYFWNWTCGIVLILSRFIPIVGQVAIAGLLAQKKFIPESAGTLKTDTVTFAVMTFAVIFIVAALSFFPVHALSTIAEHLSL</sequence>